<reference key="1">
    <citation type="journal article" date="2006" name="Proc. Natl. Acad. Sci. U.S.A.">
        <title>Identification of genes subject to positive selection in uropathogenic strains of Escherichia coli: a comparative genomics approach.</title>
        <authorList>
            <person name="Chen S.L."/>
            <person name="Hung C.-S."/>
            <person name="Xu J."/>
            <person name="Reigstad C.S."/>
            <person name="Magrini V."/>
            <person name="Sabo A."/>
            <person name="Blasiar D."/>
            <person name="Bieri T."/>
            <person name="Meyer R.R."/>
            <person name="Ozersky P."/>
            <person name="Armstrong J.R."/>
            <person name="Fulton R.S."/>
            <person name="Latreille J.P."/>
            <person name="Spieth J."/>
            <person name="Hooton T.M."/>
            <person name="Mardis E.R."/>
            <person name="Hultgren S.J."/>
            <person name="Gordon J.I."/>
        </authorList>
    </citation>
    <scope>NUCLEOTIDE SEQUENCE [LARGE SCALE GENOMIC DNA]</scope>
    <source>
        <strain>UTI89 / UPEC</strain>
    </source>
</reference>
<feature type="chain" id="PRO_0000326892" description="Protoheme IX farnesyltransferase">
    <location>
        <begin position="1"/>
        <end position="296"/>
    </location>
</feature>
<feature type="topological domain" description="Cytoplasmic" evidence="1">
    <location>
        <begin position="1"/>
        <end position="9"/>
    </location>
</feature>
<feature type="transmembrane region" description="Helical" evidence="1">
    <location>
        <begin position="10"/>
        <end position="28"/>
    </location>
</feature>
<feature type="topological domain" description="Periplasmic" evidence="1">
    <location>
        <begin position="29"/>
        <end position="37"/>
    </location>
</feature>
<feature type="transmembrane region" description="Helical" evidence="1">
    <location>
        <begin position="38"/>
        <end position="56"/>
    </location>
</feature>
<feature type="topological domain" description="Cytoplasmic" evidence="1">
    <location>
        <begin position="57"/>
        <end position="78"/>
    </location>
</feature>
<feature type="transmembrane region" description="Helical" evidence="1">
    <location>
        <begin position="79"/>
        <end position="97"/>
    </location>
</feature>
<feature type="topological domain" description="Periplasmic" evidence="1">
    <location>
        <begin position="98"/>
        <end position="107"/>
    </location>
</feature>
<feature type="transmembrane region" description="Helical" evidence="1">
    <location>
        <begin position="108"/>
        <end position="126"/>
    </location>
</feature>
<feature type="topological domain" description="Cytoplasmic" evidence="1">
    <location>
        <begin position="127"/>
        <end position="197"/>
    </location>
</feature>
<feature type="transmembrane region" description="Helical" evidence="1">
    <location>
        <begin position="198"/>
        <end position="216"/>
    </location>
</feature>
<feature type="topological domain" description="Periplasmic" evidence="1">
    <location>
        <begin position="217"/>
        <end position="228"/>
    </location>
</feature>
<feature type="transmembrane region" description="Helical" evidence="1">
    <location>
        <begin position="229"/>
        <end position="247"/>
    </location>
</feature>
<feature type="topological domain" description="Cytoplasmic" evidence="1">
    <location>
        <begin position="248"/>
        <end position="268"/>
    </location>
</feature>
<feature type="transmembrane region" description="Helical" evidence="1">
    <location>
        <begin position="269"/>
        <end position="287"/>
    </location>
</feature>
<feature type="topological domain" description="Periplasmic" evidence="1">
    <location>
        <begin position="288"/>
        <end position="296"/>
    </location>
</feature>
<name>CYOE_ECOUT</name>
<sequence>MIFKQYLQVTKPGIIFGNLISVIGGFLLASKGSIDYPLFIYTLVGVSLVVASGCVFNNYIDRDIDRKMERTKNRVLVKGLISPAVSLVYATLLGIAGFMLLWFGANPLACWLGVMGFVVYVGVYSLYMKRHSVYGTLIGSLSGAAPPVIGYCAVTGEFDSGAAILLAIFSLWQMPHSYAIAIFRFKDYQAANIPVLPVVKGISVAKNHITLYIIAFAVATLMLSLGGYAGYKYLVVAAAVSVWWLGMALRGYKVADDRIWARKLFGFSIIAITALSVMMSVDFMVPDSHTLLAAVW</sequence>
<gene>
    <name evidence="1" type="primary">cyoE</name>
    <name type="ordered locus">UTI89_C0451</name>
</gene>
<organism>
    <name type="scientific">Escherichia coli (strain UTI89 / UPEC)</name>
    <dbReference type="NCBI Taxonomy" id="364106"/>
    <lineage>
        <taxon>Bacteria</taxon>
        <taxon>Pseudomonadati</taxon>
        <taxon>Pseudomonadota</taxon>
        <taxon>Gammaproteobacteria</taxon>
        <taxon>Enterobacterales</taxon>
        <taxon>Enterobacteriaceae</taxon>
        <taxon>Escherichia</taxon>
    </lineage>
</organism>
<evidence type="ECO:0000255" key="1">
    <source>
        <dbReference type="HAMAP-Rule" id="MF_00154"/>
    </source>
</evidence>
<evidence type="ECO:0000305" key="2"/>
<comment type="function">
    <text evidence="1">Converts heme B (protoheme IX) to heme O by substitution of the vinyl group on carbon 2 of heme B porphyrin ring with a hydroxyethyl farnesyl side group.</text>
</comment>
<comment type="catalytic activity">
    <reaction evidence="1">
        <text>heme b + (2E,6E)-farnesyl diphosphate + H2O = Fe(II)-heme o + diphosphate</text>
        <dbReference type="Rhea" id="RHEA:28070"/>
        <dbReference type="ChEBI" id="CHEBI:15377"/>
        <dbReference type="ChEBI" id="CHEBI:33019"/>
        <dbReference type="ChEBI" id="CHEBI:60344"/>
        <dbReference type="ChEBI" id="CHEBI:60530"/>
        <dbReference type="ChEBI" id="CHEBI:175763"/>
        <dbReference type="EC" id="2.5.1.141"/>
    </reaction>
</comment>
<comment type="pathway">
    <text evidence="1">Porphyrin-containing compound metabolism; heme O biosynthesis; heme O from protoheme: step 1/1.</text>
</comment>
<comment type="subcellular location">
    <subcellularLocation>
        <location evidence="1">Cell inner membrane</location>
        <topology evidence="1">Multi-pass membrane protein</topology>
    </subcellularLocation>
</comment>
<comment type="miscellaneous">
    <text evidence="1">Carbon 2 of the heme B porphyrin ring is defined according to the Fischer nomenclature.</text>
</comment>
<comment type="similarity">
    <text evidence="1">Belongs to the UbiA prenyltransferase family. Protoheme IX farnesyltransferase subfamily.</text>
</comment>
<comment type="sequence caution" evidence="2">
    <conflict type="erroneous initiation">
        <sequence resource="EMBL-CDS" id="ABE05952"/>
    </conflict>
</comment>
<accession>Q1RFB2</accession>
<keyword id="KW-0997">Cell inner membrane</keyword>
<keyword id="KW-1003">Cell membrane</keyword>
<keyword id="KW-0350">Heme biosynthesis</keyword>
<keyword id="KW-0472">Membrane</keyword>
<keyword id="KW-0808">Transferase</keyword>
<keyword id="KW-0812">Transmembrane</keyword>
<keyword id="KW-1133">Transmembrane helix</keyword>
<dbReference type="EC" id="2.5.1.141" evidence="1"/>
<dbReference type="EMBL" id="CP000243">
    <property type="protein sequence ID" value="ABE05952.1"/>
    <property type="status" value="ALT_INIT"/>
    <property type="molecule type" value="Genomic_DNA"/>
</dbReference>
<dbReference type="RefSeq" id="WP_000576425.1">
    <property type="nucleotide sequence ID" value="NZ_CP064825.1"/>
</dbReference>
<dbReference type="SMR" id="Q1RFB2"/>
<dbReference type="KEGG" id="eci:UTI89_C0451"/>
<dbReference type="HOGENOM" id="CLU_029631_0_0_6"/>
<dbReference type="UniPathway" id="UPA00834">
    <property type="reaction ID" value="UER00712"/>
</dbReference>
<dbReference type="Proteomes" id="UP000001952">
    <property type="component" value="Chromosome"/>
</dbReference>
<dbReference type="GO" id="GO:0005886">
    <property type="term" value="C:plasma membrane"/>
    <property type="evidence" value="ECO:0007669"/>
    <property type="project" value="UniProtKB-SubCell"/>
</dbReference>
<dbReference type="GO" id="GO:0008495">
    <property type="term" value="F:protoheme IX farnesyltransferase activity"/>
    <property type="evidence" value="ECO:0007669"/>
    <property type="project" value="UniProtKB-UniRule"/>
</dbReference>
<dbReference type="GO" id="GO:0048034">
    <property type="term" value="P:heme O biosynthetic process"/>
    <property type="evidence" value="ECO:0007669"/>
    <property type="project" value="UniProtKB-UniRule"/>
</dbReference>
<dbReference type="CDD" id="cd13957">
    <property type="entry name" value="PT_UbiA_Cox10"/>
    <property type="match status" value="1"/>
</dbReference>
<dbReference type="FunFam" id="1.10.357.140:FF:000001">
    <property type="entry name" value="Protoheme IX farnesyltransferase"/>
    <property type="match status" value="1"/>
</dbReference>
<dbReference type="Gene3D" id="1.10.357.140">
    <property type="entry name" value="UbiA prenyltransferase"/>
    <property type="match status" value="1"/>
</dbReference>
<dbReference type="HAMAP" id="MF_00154">
    <property type="entry name" value="CyoE_CtaB"/>
    <property type="match status" value="1"/>
</dbReference>
<dbReference type="InterPro" id="IPR006369">
    <property type="entry name" value="Protohaem_IX_farnesylTrfase"/>
</dbReference>
<dbReference type="InterPro" id="IPR000537">
    <property type="entry name" value="UbiA_prenyltransferase"/>
</dbReference>
<dbReference type="InterPro" id="IPR030470">
    <property type="entry name" value="UbiA_prenylTrfase_CS"/>
</dbReference>
<dbReference type="InterPro" id="IPR044878">
    <property type="entry name" value="UbiA_sf"/>
</dbReference>
<dbReference type="NCBIfam" id="TIGR01473">
    <property type="entry name" value="cyoE_ctaB"/>
    <property type="match status" value="1"/>
</dbReference>
<dbReference type="NCBIfam" id="NF003348">
    <property type="entry name" value="PRK04375.1-1"/>
    <property type="match status" value="1"/>
</dbReference>
<dbReference type="PANTHER" id="PTHR43448">
    <property type="entry name" value="PROTOHEME IX FARNESYLTRANSFERASE, MITOCHONDRIAL"/>
    <property type="match status" value="1"/>
</dbReference>
<dbReference type="PANTHER" id="PTHR43448:SF2">
    <property type="entry name" value="PROTOHEME IX FARNESYLTRANSFERASE, MITOCHONDRIAL"/>
    <property type="match status" value="1"/>
</dbReference>
<dbReference type="Pfam" id="PF01040">
    <property type="entry name" value="UbiA"/>
    <property type="match status" value="1"/>
</dbReference>
<dbReference type="PROSITE" id="PS00943">
    <property type="entry name" value="UBIA"/>
    <property type="match status" value="1"/>
</dbReference>
<proteinExistence type="inferred from homology"/>
<protein>
    <recommendedName>
        <fullName evidence="1">Protoheme IX farnesyltransferase</fullName>
        <ecNumber evidence="1">2.5.1.141</ecNumber>
    </recommendedName>
    <alternativeName>
        <fullName evidence="1">Heme B farnesyltransferase</fullName>
    </alternativeName>
    <alternativeName>
        <fullName evidence="1">Heme O synthase</fullName>
    </alternativeName>
</protein>